<accession>Q67S72</accession>
<evidence type="ECO:0000255" key="1">
    <source>
        <dbReference type="HAMAP-Rule" id="MF_00006"/>
    </source>
</evidence>
<feature type="chain" id="PRO_0000137836" description="Argininosuccinate lyase">
    <location>
        <begin position="1"/>
        <end position="461"/>
    </location>
</feature>
<sequence>MTKLWGGRFTKPADKTAEGFTSSLAFDRRLYKQDIRGSIAHVRMLGRQGIIPAADAARIEQGLREIEAEIEAGQFPFRQEYEDIHLNIEKRLIEKIGPAGGRLHTARSRNDQVVTDVHLWVKDEIAAVQRLVSDLQGTLLDRAREQMGAVMPGYTHLQRAQPVLLSHHLMAYFWMLERDYGRFADALRRADVSPLGAGALAGTTFPIDREFTAAELGFAGVYPNSMDAVSDRDFIVEFVAAAAICQMHLSRLAEELVMWSSTEFGFVEMDDAYATGSSIMPQKKNPDVAELVRGKTGRIYGDLMALLTVLKGLPLAYHTDLQEDKERLFDAVDTLKACLTVMTGMLATLKFNRERMAQAVRRDFSNATDMADYLVKKGMPFREAHEVVGKAVLYCVERGKFLADLTLEEFKAFSALFEADIYQAIAPETCVSQRTSLGGTAPAEVERQLALAAEILSRRMG</sequence>
<reference key="1">
    <citation type="journal article" date="2004" name="Nucleic Acids Res.">
        <title>Genome sequence of Symbiobacterium thermophilum, an uncultivable bacterium that depends on microbial commensalism.</title>
        <authorList>
            <person name="Ueda K."/>
            <person name="Yamashita A."/>
            <person name="Ishikawa J."/>
            <person name="Shimada M."/>
            <person name="Watsuji T."/>
            <person name="Morimura K."/>
            <person name="Ikeda H."/>
            <person name="Hattori M."/>
            <person name="Beppu T."/>
        </authorList>
    </citation>
    <scope>NUCLEOTIDE SEQUENCE [LARGE SCALE GENOMIC DNA]</scope>
    <source>
        <strain>DSM 24528 / JCM 14929 / IAM 14863 / T</strain>
    </source>
</reference>
<name>ARLY_SYMTH</name>
<protein>
    <recommendedName>
        <fullName evidence="1">Argininosuccinate lyase</fullName>
        <shortName evidence="1">ASAL</shortName>
        <ecNumber evidence="1">4.3.2.1</ecNumber>
    </recommendedName>
    <alternativeName>
        <fullName evidence="1">Arginosuccinase</fullName>
    </alternativeName>
</protein>
<proteinExistence type="inferred from homology"/>
<gene>
    <name evidence="1" type="primary">argH</name>
    <name type="ordered locus">STH486</name>
</gene>
<organism>
    <name type="scientific">Symbiobacterium thermophilum (strain DSM 24528 / JCM 14929 / IAM 14863 / T)</name>
    <dbReference type="NCBI Taxonomy" id="292459"/>
    <lineage>
        <taxon>Bacteria</taxon>
        <taxon>Bacillati</taxon>
        <taxon>Bacillota</taxon>
        <taxon>Clostridia</taxon>
        <taxon>Eubacteriales</taxon>
        <taxon>Symbiobacteriaceae</taxon>
        <taxon>Symbiobacterium</taxon>
    </lineage>
</organism>
<dbReference type="EC" id="4.3.2.1" evidence="1"/>
<dbReference type="EMBL" id="AP006840">
    <property type="protein sequence ID" value="BAD39471.1"/>
    <property type="molecule type" value="Genomic_DNA"/>
</dbReference>
<dbReference type="RefSeq" id="WP_011194620.1">
    <property type="nucleotide sequence ID" value="NC_006177.1"/>
</dbReference>
<dbReference type="SMR" id="Q67S72"/>
<dbReference type="STRING" id="292459.STH486"/>
<dbReference type="KEGG" id="sth:STH486"/>
<dbReference type="eggNOG" id="COG0165">
    <property type="taxonomic scope" value="Bacteria"/>
</dbReference>
<dbReference type="HOGENOM" id="CLU_027272_2_3_9"/>
<dbReference type="OrthoDB" id="9769623at2"/>
<dbReference type="UniPathway" id="UPA00068">
    <property type="reaction ID" value="UER00114"/>
</dbReference>
<dbReference type="Proteomes" id="UP000000417">
    <property type="component" value="Chromosome"/>
</dbReference>
<dbReference type="GO" id="GO:0005829">
    <property type="term" value="C:cytosol"/>
    <property type="evidence" value="ECO:0007669"/>
    <property type="project" value="TreeGrafter"/>
</dbReference>
<dbReference type="GO" id="GO:0004056">
    <property type="term" value="F:argininosuccinate lyase activity"/>
    <property type="evidence" value="ECO:0007669"/>
    <property type="project" value="UniProtKB-UniRule"/>
</dbReference>
<dbReference type="GO" id="GO:0042450">
    <property type="term" value="P:arginine biosynthetic process via ornithine"/>
    <property type="evidence" value="ECO:0007669"/>
    <property type="project" value="InterPro"/>
</dbReference>
<dbReference type="GO" id="GO:0006526">
    <property type="term" value="P:L-arginine biosynthetic process"/>
    <property type="evidence" value="ECO:0007669"/>
    <property type="project" value="UniProtKB-UniRule"/>
</dbReference>
<dbReference type="CDD" id="cd01359">
    <property type="entry name" value="Argininosuccinate_lyase"/>
    <property type="match status" value="1"/>
</dbReference>
<dbReference type="FunFam" id="1.10.275.10:FF:000002">
    <property type="entry name" value="Argininosuccinate lyase"/>
    <property type="match status" value="1"/>
</dbReference>
<dbReference type="FunFam" id="1.10.40.30:FF:000001">
    <property type="entry name" value="Argininosuccinate lyase"/>
    <property type="match status" value="1"/>
</dbReference>
<dbReference type="FunFam" id="1.20.200.10:FF:000002">
    <property type="entry name" value="Argininosuccinate lyase"/>
    <property type="match status" value="1"/>
</dbReference>
<dbReference type="Gene3D" id="1.10.40.30">
    <property type="entry name" value="Fumarase/aspartase (C-terminal domain)"/>
    <property type="match status" value="1"/>
</dbReference>
<dbReference type="Gene3D" id="1.20.200.10">
    <property type="entry name" value="Fumarase/aspartase (Central domain)"/>
    <property type="match status" value="1"/>
</dbReference>
<dbReference type="Gene3D" id="1.10.275.10">
    <property type="entry name" value="Fumarase/aspartase (N-terminal domain)"/>
    <property type="match status" value="1"/>
</dbReference>
<dbReference type="HAMAP" id="MF_00006">
    <property type="entry name" value="Arg_succ_lyase"/>
    <property type="match status" value="1"/>
</dbReference>
<dbReference type="InterPro" id="IPR029419">
    <property type="entry name" value="Arg_succ_lyase_C"/>
</dbReference>
<dbReference type="InterPro" id="IPR009049">
    <property type="entry name" value="Argininosuccinate_lyase"/>
</dbReference>
<dbReference type="InterPro" id="IPR024083">
    <property type="entry name" value="Fumarase/histidase_N"/>
</dbReference>
<dbReference type="InterPro" id="IPR020557">
    <property type="entry name" value="Fumarate_lyase_CS"/>
</dbReference>
<dbReference type="InterPro" id="IPR000362">
    <property type="entry name" value="Fumarate_lyase_fam"/>
</dbReference>
<dbReference type="InterPro" id="IPR022761">
    <property type="entry name" value="Fumarate_lyase_N"/>
</dbReference>
<dbReference type="InterPro" id="IPR008948">
    <property type="entry name" value="L-Aspartase-like"/>
</dbReference>
<dbReference type="NCBIfam" id="TIGR00838">
    <property type="entry name" value="argH"/>
    <property type="match status" value="1"/>
</dbReference>
<dbReference type="PANTHER" id="PTHR43814">
    <property type="entry name" value="ARGININOSUCCINATE LYASE"/>
    <property type="match status" value="1"/>
</dbReference>
<dbReference type="PANTHER" id="PTHR43814:SF1">
    <property type="entry name" value="ARGININOSUCCINATE LYASE"/>
    <property type="match status" value="1"/>
</dbReference>
<dbReference type="Pfam" id="PF14698">
    <property type="entry name" value="ASL_C2"/>
    <property type="match status" value="1"/>
</dbReference>
<dbReference type="Pfam" id="PF00206">
    <property type="entry name" value="Lyase_1"/>
    <property type="match status" value="1"/>
</dbReference>
<dbReference type="PRINTS" id="PR00145">
    <property type="entry name" value="ARGSUCLYASE"/>
</dbReference>
<dbReference type="PRINTS" id="PR00149">
    <property type="entry name" value="FUMRATELYASE"/>
</dbReference>
<dbReference type="SUPFAM" id="SSF48557">
    <property type="entry name" value="L-aspartase-like"/>
    <property type="match status" value="1"/>
</dbReference>
<dbReference type="PROSITE" id="PS00163">
    <property type="entry name" value="FUMARATE_LYASES"/>
    <property type="match status" value="1"/>
</dbReference>
<comment type="catalytic activity">
    <reaction evidence="1">
        <text>2-(N(omega)-L-arginino)succinate = fumarate + L-arginine</text>
        <dbReference type="Rhea" id="RHEA:24020"/>
        <dbReference type="ChEBI" id="CHEBI:29806"/>
        <dbReference type="ChEBI" id="CHEBI:32682"/>
        <dbReference type="ChEBI" id="CHEBI:57472"/>
        <dbReference type="EC" id="4.3.2.1"/>
    </reaction>
</comment>
<comment type="pathway">
    <text evidence="1">Amino-acid biosynthesis; L-arginine biosynthesis; L-arginine from L-ornithine and carbamoyl phosphate: step 3/3.</text>
</comment>
<comment type="subcellular location">
    <subcellularLocation>
        <location evidence="1">Cytoplasm</location>
    </subcellularLocation>
</comment>
<comment type="similarity">
    <text evidence="1">Belongs to the lyase 1 family. Argininosuccinate lyase subfamily.</text>
</comment>
<keyword id="KW-0028">Amino-acid biosynthesis</keyword>
<keyword id="KW-0055">Arginine biosynthesis</keyword>
<keyword id="KW-0963">Cytoplasm</keyword>
<keyword id="KW-0456">Lyase</keyword>
<keyword id="KW-1185">Reference proteome</keyword>